<evidence type="ECO:0000250" key="1"/>
<evidence type="ECO:0000256" key="2">
    <source>
        <dbReference type="SAM" id="MobiDB-lite"/>
    </source>
</evidence>
<evidence type="ECO:0000305" key="3"/>
<evidence type="ECO:0000305" key="4">
    <source>
    </source>
</evidence>
<protein>
    <recommendedName>
        <fullName>Serine/threonine-protein phosphatase BSL1 homolog</fullName>
        <ecNumber>3.1.3.16</ecNumber>
    </recommendedName>
    <alternativeName>
        <fullName>BSU1-like protein 1 homolog</fullName>
    </alternativeName>
</protein>
<organism>
    <name type="scientific">Oryza sativa subsp. japonica</name>
    <name type="common">Rice</name>
    <dbReference type="NCBI Taxonomy" id="39947"/>
    <lineage>
        <taxon>Eukaryota</taxon>
        <taxon>Viridiplantae</taxon>
        <taxon>Streptophyta</taxon>
        <taxon>Embryophyta</taxon>
        <taxon>Tracheophyta</taxon>
        <taxon>Spermatophyta</taxon>
        <taxon>Magnoliopsida</taxon>
        <taxon>Liliopsida</taxon>
        <taxon>Poales</taxon>
        <taxon>Poaceae</taxon>
        <taxon>BOP clade</taxon>
        <taxon>Oryzoideae</taxon>
        <taxon>Oryzeae</taxon>
        <taxon>Oryzinae</taxon>
        <taxon>Oryza</taxon>
        <taxon>Oryza sativa</taxon>
    </lineage>
</organism>
<reference key="1">
    <citation type="journal article" date="2005" name="Mol. Genet. Genomics">
        <title>A fine physical map of the rice chromosome 5.</title>
        <authorList>
            <person name="Cheng C.-H."/>
            <person name="Chung M.C."/>
            <person name="Liu S.-M."/>
            <person name="Chen S.-K."/>
            <person name="Kao F.Y."/>
            <person name="Lin S.-J."/>
            <person name="Hsiao S.-H."/>
            <person name="Tseng I.C."/>
            <person name="Hsing Y.-I.C."/>
            <person name="Wu H.-P."/>
            <person name="Chen C.-S."/>
            <person name="Shaw J.-F."/>
            <person name="Wu J."/>
            <person name="Matsumoto T."/>
            <person name="Sasaki T."/>
            <person name="Chen H.-C."/>
            <person name="Chow T.-Y."/>
        </authorList>
    </citation>
    <scope>NUCLEOTIDE SEQUENCE [LARGE SCALE GENOMIC DNA]</scope>
    <source>
        <strain>cv. Nipponbare</strain>
    </source>
</reference>
<reference key="2">
    <citation type="journal article" date="2005" name="Nature">
        <title>The map-based sequence of the rice genome.</title>
        <authorList>
            <consortium name="International rice genome sequencing project (IRGSP)"/>
        </authorList>
    </citation>
    <scope>NUCLEOTIDE SEQUENCE [LARGE SCALE GENOMIC DNA]</scope>
    <source>
        <strain>cv. Nipponbare</strain>
    </source>
</reference>
<reference key="3">
    <citation type="journal article" date="2008" name="Nucleic Acids Res.">
        <title>The rice annotation project database (RAP-DB): 2008 update.</title>
        <authorList>
            <consortium name="The rice annotation project (RAP)"/>
        </authorList>
    </citation>
    <scope>GENOME REANNOTATION</scope>
    <source>
        <strain>cv. Nipponbare</strain>
    </source>
</reference>
<reference key="4">
    <citation type="journal article" date="2013" name="Rice">
        <title>Improvement of the Oryza sativa Nipponbare reference genome using next generation sequence and optical map data.</title>
        <authorList>
            <person name="Kawahara Y."/>
            <person name="de la Bastide M."/>
            <person name="Hamilton J.P."/>
            <person name="Kanamori H."/>
            <person name="McCombie W.R."/>
            <person name="Ouyang S."/>
            <person name="Schwartz D.C."/>
            <person name="Tanaka T."/>
            <person name="Wu J."/>
            <person name="Zhou S."/>
            <person name="Childs K.L."/>
            <person name="Davidson R.M."/>
            <person name="Lin H."/>
            <person name="Quesada-Ocampo L."/>
            <person name="Vaillancourt B."/>
            <person name="Sakai H."/>
            <person name="Lee S.S."/>
            <person name="Kim J."/>
            <person name="Numa H."/>
            <person name="Itoh T."/>
            <person name="Buell C.R."/>
            <person name="Matsumoto T."/>
        </authorList>
    </citation>
    <scope>GENOME REANNOTATION</scope>
    <source>
        <strain>cv. Nipponbare</strain>
    </source>
</reference>
<reference key="5">
    <citation type="journal article" date="2003" name="Science">
        <title>Collection, mapping, and annotation of over 28,000 cDNA clones from japonica rice.</title>
        <authorList>
            <consortium name="The rice full-length cDNA consortium"/>
        </authorList>
    </citation>
    <scope>NUCLEOTIDE SEQUENCE [LARGE SCALE MRNA]</scope>
    <source>
        <strain>cv. Nipponbare</strain>
    </source>
</reference>
<reference key="6">
    <citation type="journal article" date="2016" name="Plant Physiol.">
        <title>OsBRI1 activates BR signaling by preventing binding between the TPR and kinase domains of OsBSK3 via phosphorylation.</title>
        <authorList>
            <person name="Zhang B."/>
            <person name="Wang X."/>
            <person name="Zhao Z."/>
            <person name="Wang R."/>
            <person name="Huang X."/>
            <person name="Zhu Y."/>
            <person name="Yuan L."/>
            <person name="Wang Y."/>
            <person name="Xu X."/>
            <person name="Burlingame A.L."/>
            <person name="Gao Y."/>
            <person name="Sun Y."/>
            <person name="Tang W."/>
        </authorList>
    </citation>
    <scope>INTERACTION WITH BSK3</scope>
</reference>
<comment type="catalytic activity">
    <reaction>
        <text>O-phospho-L-seryl-[protein] + H2O = L-seryl-[protein] + phosphate</text>
        <dbReference type="Rhea" id="RHEA:20629"/>
        <dbReference type="Rhea" id="RHEA-COMP:9863"/>
        <dbReference type="Rhea" id="RHEA-COMP:11604"/>
        <dbReference type="ChEBI" id="CHEBI:15377"/>
        <dbReference type="ChEBI" id="CHEBI:29999"/>
        <dbReference type="ChEBI" id="CHEBI:43474"/>
        <dbReference type="ChEBI" id="CHEBI:83421"/>
        <dbReference type="EC" id="3.1.3.16"/>
    </reaction>
</comment>
<comment type="catalytic activity">
    <reaction>
        <text>O-phospho-L-threonyl-[protein] + H2O = L-threonyl-[protein] + phosphate</text>
        <dbReference type="Rhea" id="RHEA:47004"/>
        <dbReference type="Rhea" id="RHEA-COMP:11060"/>
        <dbReference type="Rhea" id="RHEA-COMP:11605"/>
        <dbReference type="ChEBI" id="CHEBI:15377"/>
        <dbReference type="ChEBI" id="CHEBI:30013"/>
        <dbReference type="ChEBI" id="CHEBI:43474"/>
        <dbReference type="ChEBI" id="CHEBI:61977"/>
        <dbReference type="EC" id="3.1.3.16"/>
    </reaction>
</comment>
<comment type="cofactor">
    <cofactor evidence="1">
        <name>Mn(2+)</name>
        <dbReference type="ChEBI" id="CHEBI:29035"/>
    </cofactor>
    <text evidence="1">Binds 2 manganese ions per subunit.</text>
</comment>
<comment type="subunit">
    <text evidence="4">Interacts with the phosphorylated form of BSK3.</text>
</comment>
<comment type="subcellular location">
    <subcellularLocation>
        <location evidence="1">Nucleus</location>
    </subcellularLocation>
</comment>
<comment type="similarity">
    <text evidence="3">Belongs to the PPP phosphatase family. BSU subfamily.</text>
</comment>
<feature type="chain" id="PRO_0000247484" description="Serine/threonine-protein phosphatase BSL1 homolog">
    <location>
        <begin position="1"/>
        <end position="883"/>
    </location>
</feature>
<feature type="repeat" description="Kelch 1">
    <location>
        <begin position="64"/>
        <end position="113"/>
    </location>
</feature>
<feature type="repeat" description="Kelch 2">
    <location>
        <begin position="221"/>
        <end position="271"/>
    </location>
</feature>
<feature type="repeat" description="Kelch 3">
    <location>
        <begin position="273"/>
        <end position="323"/>
    </location>
</feature>
<feature type="repeat" description="Kelch 4">
    <location>
        <begin position="341"/>
        <end position="387"/>
    </location>
</feature>
<feature type="region of interest" description="Disordered" evidence="2">
    <location>
        <begin position="381"/>
        <end position="402"/>
    </location>
</feature>
<feature type="region of interest" description="Disordered" evidence="2">
    <location>
        <begin position="430"/>
        <end position="466"/>
    </location>
</feature>
<feature type="region of interest" description="Disordered" evidence="2">
    <location>
        <begin position="499"/>
        <end position="525"/>
    </location>
</feature>
<feature type="region of interest" description="Disordered" evidence="2">
    <location>
        <begin position="861"/>
        <end position="883"/>
    </location>
</feature>
<feature type="compositionally biased region" description="Polar residues" evidence="2">
    <location>
        <begin position="385"/>
        <end position="399"/>
    </location>
</feature>
<feature type="compositionally biased region" description="Polar residues" evidence="2">
    <location>
        <begin position="872"/>
        <end position="883"/>
    </location>
</feature>
<feature type="active site" description="Proton donor" evidence="1">
    <location>
        <position position="653"/>
    </location>
</feature>
<feature type="binding site" evidence="1">
    <location>
        <position position="586"/>
    </location>
    <ligand>
        <name>Mn(2+)</name>
        <dbReference type="ChEBI" id="CHEBI:29035"/>
        <label>1</label>
    </ligand>
</feature>
<feature type="binding site" evidence="1">
    <location>
        <position position="588"/>
    </location>
    <ligand>
        <name>Mn(2+)</name>
        <dbReference type="ChEBI" id="CHEBI:29035"/>
        <label>1</label>
    </ligand>
</feature>
<feature type="binding site" evidence="1">
    <location>
        <position position="620"/>
    </location>
    <ligand>
        <name>Mn(2+)</name>
        <dbReference type="ChEBI" id="CHEBI:29035"/>
        <label>1</label>
    </ligand>
</feature>
<feature type="binding site" evidence="1">
    <location>
        <position position="620"/>
    </location>
    <ligand>
        <name>Mn(2+)</name>
        <dbReference type="ChEBI" id="CHEBI:29035"/>
        <label>2</label>
    </ligand>
</feature>
<feature type="binding site" evidence="1">
    <location>
        <position position="652"/>
    </location>
    <ligand>
        <name>Mn(2+)</name>
        <dbReference type="ChEBI" id="CHEBI:29035"/>
        <label>2</label>
    </ligand>
</feature>
<feature type="binding site" evidence="1">
    <location>
        <position position="705"/>
    </location>
    <ligand>
        <name>Mn(2+)</name>
        <dbReference type="ChEBI" id="CHEBI:29035"/>
        <label>2</label>
    </ligand>
</feature>
<feature type="binding site" evidence="1">
    <location>
        <position position="784"/>
    </location>
    <ligand>
        <name>Mn(2+)</name>
        <dbReference type="ChEBI" id="CHEBI:29035"/>
        <label>2</label>
    </ligand>
</feature>
<gene>
    <name type="primary">BSL1</name>
    <name type="ordered locus">Os05g0144400</name>
    <name type="ordered locus">LOC_Os05g05240</name>
    <name type="ORF">OJ1607_F09.10</name>
</gene>
<proteinExistence type="evidence at protein level"/>
<accession>Q60EX6</accession>
<accession>Q0DKT4</accession>
<keyword id="KW-0378">Hydrolase</keyword>
<keyword id="KW-0880">Kelch repeat</keyword>
<keyword id="KW-0464">Manganese</keyword>
<keyword id="KW-0479">Metal-binding</keyword>
<keyword id="KW-0539">Nucleus</keyword>
<keyword id="KW-0904">Protein phosphatase</keyword>
<keyword id="KW-1185">Reference proteome</keyword>
<keyword id="KW-0677">Repeat</keyword>
<sequence>MGTAGKGAWVVPAPAYREVEGWEGAGDDSPGFRCGHSLTVVAPTKGHGPRLILFGGATAIEAGASSGMPGIRLAGVTNSVHSYDVDTRRWTRLHPAGEPPSPRAAHAAAAVGTMVVFQGGIGPAGHSTDDLYVLDLTNDKFKWHRVVVQGAGPGPRYGHCMDLVAQRYLVTVSGNDGKRVLSDAWALDTAQKPYRWQKLNPDGDRPSARMYATASARTDGMLLLCGGRDASGMPLSDAYGLLMHTSGQWEWTLAPGVSPSPRYQHAAVFVGARLHVTGGVLRGGRAIEGEGAIAVLDTAAGVWLDRNGIVTSRTLKSSHDHDASSDLLRRCRHAAASVGTQIYIYGGLRGDILLDDFLVADNAPIQSEFTSSMYDRVPRAENQNRNHNFNSDSPTTNNSTDKKSIDMLTQASAAEAEAVSAVWRAAQEASHASSEDSLSEGIGSESPLSETSPMPEDLDDGGSLEPDVKLHSRAVVVSKEAVGDLGCLVRQLSLDQFENESRRMHPSSNDQSYPAKKALNRQRSPQGLHKKVISFLLKPRNWRAPAERAFFLDSYEVGELCYAAEQIFMQEPTVLQLKAPIKVFGDLHGQFGDLMRLFDEYGYPSTAGDITYIDYLFLGDYVDRGQHSLETITLLLALKIEYPENVHLIRGNHEAADINALFGFRLECIERMGESDGIWAWTRFNQLFNYLPLAAMIEKKIICMHGGIGRSINTIEQIEKLERPITMDVGSIILMDLLWSDPTENDSVEGLRPNARGPGLVTFGPDRVTEFCKRNRLQLIIRAHECVMDGFERFAHGQLITLFSATNYCGTANNAGAILVVGRGLVIVPKLIHPLPPPVNSPESSPERAMDATWMQELNIQRPPTPTRGRPQSASDRNSLAYI</sequence>
<dbReference type="EC" id="3.1.3.16"/>
<dbReference type="EMBL" id="AC104283">
    <property type="protein sequence ID" value="AAU90203.1"/>
    <property type="molecule type" value="Genomic_DNA"/>
</dbReference>
<dbReference type="EMBL" id="AP008211">
    <property type="protein sequence ID" value="BAF16539.1"/>
    <property type="molecule type" value="Genomic_DNA"/>
</dbReference>
<dbReference type="EMBL" id="AP014961">
    <property type="protein sequence ID" value="BAS92232.1"/>
    <property type="molecule type" value="Genomic_DNA"/>
</dbReference>
<dbReference type="EMBL" id="AK120211">
    <property type="protein sequence ID" value="BAG99920.1"/>
    <property type="molecule type" value="mRNA"/>
</dbReference>
<dbReference type="RefSeq" id="XP_015640150.1">
    <property type="nucleotide sequence ID" value="XM_015784664.1"/>
</dbReference>
<dbReference type="SMR" id="Q60EX6"/>
<dbReference type="FunCoup" id="Q60EX6">
    <property type="interactions" value="514"/>
</dbReference>
<dbReference type="STRING" id="39947.Q60EX6"/>
<dbReference type="PaxDb" id="39947-Q60EX6"/>
<dbReference type="EnsemblPlants" id="Os05t0144400-01">
    <property type="protein sequence ID" value="Os05t0144400-01"/>
    <property type="gene ID" value="Os05g0144400"/>
</dbReference>
<dbReference type="Gramene" id="Os05t0144400-01">
    <property type="protein sequence ID" value="Os05t0144400-01"/>
    <property type="gene ID" value="Os05g0144400"/>
</dbReference>
<dbReference type="KEGG" id="dosa:Os05g0144400"/>
<dbReference type="eggNOG" id="KOG0374">
    <property type="taxonomic scope" value="Eukaryota"/>
</dbReference>
<dbReference type="eggNOG" id="KOG0379">
    <property type="taxonomic scope" value="Eukaryota"/>
</dbReference>
<dbReference type="HOGENOM" id="CLU_004962_7_1_1"/>
<dbReference type="InParanoid" id="Q60EX6"/>
<dbReference type="OMA" id="FRHTSWM"/>
<dbReference type="OrthoDB" id="309851at2759"/>
<dbReference type="PlantReactome" id="R-OSA-5632095">
    <property type="pathway name" value="Brassinosteroid signaling"/>
</dbReference>
<dbReference type="Proteomes" id="UP000000763">
    <property type="component" value="Chromosome 5"/>
</dbReference>
<dbReference type="Proteomes" id="UP000059680">
    <property type="component" value="Chromosome 5"/>
</dbReference>
<dbReference type="GO" id="GO:0005634">
    <property type="term" value="C:nucleus"/>
    <property type="evidence" value="ECO:0007669"/>
    <property type="project" value="UniProtKB-SubCell"/>
</dbReference>
<dbReference type="GO" id="GO:0046872">
    <property type="term" value="F:metal ion binding"/>
    <property type="evidence" value="ECO:0007669"/>
    <property type="project" value="UniProtKB-KW"/>
</dbReference>
<dbReference type="GO" id="GO:0004722">
    <property type="term" value="F:protein serine/threonine phosphatase activity"/>
    <property type="evidence" value="ECO:0007669"/>
    <property type="project" value="UniProtKB-EC"/>
</dbReference>
<dbReference type="GO" id="GO:0009742">
    <property type="term" value="P:brassinosteroid mediated signaling pathway"/>
    <property type="evidence" value="ECO:0007669"/>
    <property type="project" value="InterPro"/>
</dbReference>
<dbReference type="CDD" id="cd07419">
    <property type="entry name" value="MPP_Bsu1_C"/>
    <property type="match status" value="1"/>
</dbReference>
<dbReference type="FunFam" id="2.120.10.80:FF:000042">
    <property type="entry name" value="Serine/threonine-protein phosphatase"/>
    <property type="match status" value="1"/>
</dbReference>
<dbReference type="FunFam" id="2.120.10.80:FF:000097">
    <property type="entry name" value="Serine/threonine-protein phosphatase"/>
    <property type="match status" value="1"/>
</dbReference>
<dbReference type="FunFam" id="3.60.21.10:FF:000008">
    <property type="entry name" value="Serine/threonine-protein phosphatase"/>
    <property type="match status" value="1"/>
</dbReference>
<dbReference type="Gene3D" id="3.60.21.10">
    <property type="match status" value="1"/>
</dbReference>
<dbReference type="Gene3D" id="2.120.10.80">
    <property type="entry name" value="Kelch-type beta propeller"/>
    <property type="match status" value="2"/>
</dbReference>
<dbReference type="InterPro" id="IPR004843">
    <property type="entry name" value="Calcineurin-like_PHP_ApaH"/>
</dbReference>
<dbReference type="InterPro" id="IPR015915">
    <property type="entry name" value="Kelch-typ_b-propeller"/>
</dbReference>
<dbReference type="InterPro" id="IPR006652">
    <property type="entry name" value="Kelch_1"/>
</dbReference>
<dbReference type="InterPro" id="IPR029052">
    <property type="entry name" value="Metallo-depent_PP-like"/>
</dbReference>
<dbReference type="InterPro" id="IPR041758">
    <property type="entry name" value="MPP_BSL_C"/>
</dbReference>
<dbReference type="InterPro" id="IPR006186">
    <property type="entry name" value="Ser/Thr-sp_prot-phosphatase"/>
</dbReference>
<dbReference type="InterPro" id="IPR012391">
    <property type="entry name" value="Ser/Thr_prot_Pase_BSU1"/>
</dbReference>
<dbReference type="PANTHER" id="PTHR46422">
    <property type="entry name" value="SERINE/THREONINE-PROTEIN PHOSPHATASE BSL3"/>
    <property type="match status" value="1"/>
</dbReference>
<dbReference type="PANTHER" id="PTHR46422:SF6">
    <property type="entry name" value="SERINE_THREONINE-PROTEIN PHOSPHATASE BSL1"/>
    <property type="match status" value="1"/>
</dbReference>
<dbReference type="Pfam" id="PF01344">
    <property type="entry name" value="Kelch_1"/>
    <property type="match status" value="1"/>
</dbReference>
<dbReference type="Pfam" id="PF24681">
    <property type="entry name" value="Kelch_KLHDC2_KLHL20_DRC7"/>
    <property type="match status" value="1"/>
</dbReference>
<dbReference type="Pfam" id="PF00149">
    <property type="entry name" value="Metallophos"/>
    <property type="match status" value="1"/>
</dbReference>
<dbReference type="PIRSF" id="PIRSF036363">
    <property type="entry name" value="PPP_BSU1"/>
    <property type="match status" value="1"/>
</dbReference>
<dbReference type="PRINTS" id="PR00114">
    <property type="entry name" value="STPHPHTASE"/>
</dbReference>
<dbReference type="SMART" id="SM00156">
    <property type="entry name" value="PP2Ac"/>
    <property type="match status" value="1"/>
</dbReference>
<dbReference type="SUPFAM" id="SSF117281">
    <property type="entry name" value="Kelch motif"/>
    <property type="match status" value="1"/>
</dbReference>
<dbReference type="SUPFAM" id="SSF56300">
    <property type="entry name" value="Metallo-dependent phosphatases"/>
    <property type="match status" value="1"/>
</dbReference>
<dbReference type="PROSITE" id="PS00125">
    <property type="entry name" value="SER_THR_PHOSPHATASE"/>
    <property type="match status" value="1"/>
</dbReference>
<name>BSL1_ORYSJ</name>